<proteinExistence type="inferred from homology"/>
<comment type="function">
    <text evidence="2">Component of the ubiquinol-cytochrome c reductase complex (complex III or cytochrome b-c1 complex) that is part of the mitochondrial respiratory chain. The b-c1 complex mediates electron transfer from ubiquinol to cytochrome c. Contributes to the generation of a proton gradient across the mitochondrial membrane that is then used for ATP synthesis.</text>
</comment>
<comment type="cofactor">
    <cofactor evidence="2">
        <name>heme b</name>
        <dbReference type="ChEBI" id="CHEBI:60344"/>
    </cofactor>
    <text evidence="2">Binds 2 heme b groups non-covalently.</text>
</comment>
<comment type="subunit">
    <text evidence="2">The cytochrome bc1 complex contains 3 respiratory subunits (MT-CYB, CYC1 and UQCRFS1), 2 core proteins (UQCRC1 and UQCRC2) and probably 6 low-molecular weight proteins.</text>
</comment>
<comment type="subcellular location">
    <subcellularLocation>
        <location evidence="2">Mitochondrion inner membrane</location>
        <topology evidence="2">Multi-pass membrane protein</topology>
    </subcellularLocation>
</comment>
<comment type="miscellaneous">
    <text evidence="1">Heme 1 (or BL or b562) is low-potential and absorbs at about 562 nm, and heme 2 (or BH or b566) is high-potential and absorbs at about 566 nm.</text>
</comment>
<comment type="similarity">
    <text evidence="3 4">Belongs to the cytochrome b family.</text>
</comment>
<comment type="caution">
    <text evidence="2">The full-length protein contains only eight transmembrane helices, not nine as predicted by bioinformatics tools.</text>
</comment>
<name>CYB_ERYCC</name>
<reference key="1">
    <citation type="thesis" date="1997" institute="Queen's University / Kingston" country="Canada">
        <title>Hic Sunt Serpentes -- molecular phylogenetics and the Boidae (Serpentes: Booidea).</title>
        <authorList>
            <person name="Campbell B.N."/>
        </authorList>
    </citation>
    <scope>NUCLEOTIDE SEQUENCE [GENOMIC DNA]</scope>
</reference>
<dbReference type="EMBL" id="U69811">
    <property type="protein sequence ID" value="AAC01816.1"/>
    <property type="molecule type" value="Genomic_DNA"/>
</dbReference>
<dbReference type="SMR" id="O48066"/>
<dbReference type="GO" id="GO:0005743">
    <property type="term" value="C:mitochondrial inner membrane"/>
    <property type="evidence" value="ECO:0007669"/>
    <property type="project" value="UniProtKB-SubCell"/>
</dbReference>
<dbReference type="GO" id="GO:0045275">
    <property type="term" value="C:respiratory chain complex III"/>
    <property type="evidence" value="ECO:0007669"/>
    <property type="project" value="InterPro"/>
</dbReference>
<dbReference type="GO" id="GO:0046872">
    <property type="term" value="F:metal ion binding"/>
    <property type="evidence" value="ECO:0007669"/>
    <property type="project" value="UniProtKB-KW"/>
</dbReference>
<dbReference type="GO" id="GO:0008121">
    <property type="term" value="F:ubiquinol-cytochrome-c reductase activity"/>
    <property type="evidence" value="ECO:0007669"/>
    <property type="project" value="InterPro"/>
</dbReference>
<dbReference type="GO" id="GO:0006122">
    <property type="term" value="P:mitochondrial electron transport, ubiquinol to cytochrome c"/>
    <property type="evidence" value="ECO:0007669"/>
    <property type="project" value="TreeGrafter"/>
</dbReference>
<dbReference type="CDD" id="cd00290">
    <property type="entry name" value="cytochrome_b_C"/>
    <property type="match status" value="1"/>
</dbReference>
<dbReference type="CDD" id="cd00284">
    <property type="entry name" value="Cytochrome_b_N"/>
    <property type="match status" value="1"/>
</dbReference>
<dbReference type="Gene3D" id="1.20.810.10">
    <property type="entry name" value="Cytochrome Bc1 Complex, Chain C"/>
    <property type="match status" value="1"/>
</dbReference>
<dbReference type="InterPro" id="IPR005798">
    <property type="entry name" value="Cyt_b/b6_C"/>
</dbReference>
<dbReference type="InterPro" id="IPR036150">
    <property type="entry name" value="Cyt_b/b6_C_sf"/>
</dbReference>
<dbReference type="InterPro" id="IPR005797">
    <property type="entry name" value="Cyt_b/b6_N"/>
</dbReference>
<dbReference type="InterPro" id="IPR027387">
    <property type="entry name" value="Cytb/b6-like_sf"/>
</dbReference>
<dbReference type="InterPro" id="IPR030689">
    <property type="entry name" value="Cytochrome_b"/>
</dbReference>
<dbReference type="InterPro" id="IPR048260">
    <property type="entry name" value="Cytochrome_b_C_euk/bac"/>
</dbReference>
<dbReference type="InterPro" id="IPR048259">
    <property type="entry name" value="Cytochrome_b_N_euk/bac"/>
</dbReference>
<dbReference type="InterPro" id="IPR016174">
    <property type="entry name" value="Di-haem_cyt_TM"/>
</dbReference>
<dbReference type="PANTHER" id="PTHR19271">
    <property type="entry name" value="CYTOCHROME B"/>
    <property type="match status" value="1"/>
</dbReference>
<dbReference type="PANTHER" id="PTHR19271:SF16">
    <property type="entry name" value="CYTOCHROME B"/>
    <property type="match status" value="1"/>
</dbReference>
<dbReference type="Pfam" id="PF00032">
    <property type="entry name" value="Cytochrom_B_C"/>
    <property type="match status" value="1"/>
</dbReference>
<dbReference type="Pfam" id="PF00033">
    <property type="entry name" value="Cytochrome_B"/>
    <property type="match status" value="1"/>
</dbReference>
<dbReference type="PIRSF" id="PIRSF038885">
    <property type="entry name" value="COB"/>
    <property type="match status" value="1"/>
</dbReference>
<dbReference type="SUPFAM" id="SSF81648">
    <property type="entry name" value="a domain/subunit of cytochrome bc1 complex (Ubiquinol-cytochrome c reductase)"/>
    <property type="match status" value="1"/>
</dbReference>
<dbReference type="SUPFAM" id="SSF81342">
    <property type="entry name" value="Transmembrane di-heme cytochromes"/>
    <property type="match status" value="1"/>
</dbReference>
<dbReference type="PROSITE" id="PS51003">
    <property type="entry name" value="CYTB_CTER"/>
    <property type="match status" value="1"/>
</dbReference>
<dbReference type="PROSITE" id="PS51002">
    <property type="entry name" value="CYTB_NTER"/>
    <property type="match status" value="1"/>
</dbReference>
<evidence type="ECO:0000250" key="1"/>
<evidence type="ECO:0000250" key="2">
    <source>
        <dbReference type="UniProtKB" id="P00157"/>
    </source>
</evidence>
<evidence type="ECO:0000255" key="3">
    <source>
        <dbReference type="PROSITE-ProRule" id="PRU00967"/>
    </source>
</evidence>
<evidence type="ECO:0000255" key="4">
    <source>
        <dbReference type="PROSITE-ProRule" id="PRU00968"/>
    </source>
</evidence>
<protein>
    <recommendedName>
        <fullName>Cytochrome b</fullName>
    </recommendedName>
    <alternativeName>
        <fullName>Complex III subunit 3</fullName>
    </alternativeName>
    <alternativeName>
        <fullName>Complex III subunit III</fullName>
    </alternativeName>
    <alternativeName>
        <fullName>Cytochrome b-c1 complex subunit 3</fullName>
    </alternativeName>
    <alternativeName>
        <fullName>Ubiquinol-cytochrome-c reductase complex cytochrome b subunit</fullName>
    </alternativeName>
</protein>
<accession>O48066</accession>
<feature type="chain" id="PRO_0000060942" description="Cytochrome b">
    <location>
        <begin position="1"/>
        <end position="371"/>
    </location>
</feature>
<feature type="transmembrane region" description="Helical" evidence="2">
    <location>
        <begin position="25"/>
        <end position="45"/>
    </location>
</feature>
<feature type="transmembrane region" description="Helical" evidence="2">
    <location>
        <begin position="69"/>
        <end position="90"/>
    </location>
</feature>
<feature type="transmembrane region" description="Helical" evidence="2">
    <location>
        <begin position="105"/>
        <end position="125"/>
    </location>
</feature>
<feature type="transmembrane region" description="Helical" evidence="2">
    <location>
        <begin position="170"/>
        <end position="190"/>
    </location>
</feature>
<feature type="transmembrane region" description="Helical" evidence="2">
    <location>
        <begin position="218"/>
        <end position="238"/>
    </location>
</feature>
<feature type="transmembrane region" description="Helical" evidence="2">
    <location>
        <begin position="280"/>
        <end position="300"/>
    </location>
</feature>
<feature type="transmembrane region" description="Helical" evidence="2">
    <location>
        <begin position="312"/>
        <end position="332"/>
    </location>
</feature>
<feature type="transmembrane region" description="Helical" evidence="2">
    <location>
        <begin position="339"/>
        <end position="358"/>
    </location>
</feature>
<feature type="binding site" description="axial binding residue" evidence="2">
    <location>
        <position position="75"/>
    </location>
    <ligand>
        <name>heme b</name>
        <dbReference type="ChEBI" id="CHEBI:60344"/>
        <label>b562</label>
    </ligand>
    <ligandPart>
        <name>Fe</name>
        <dbReference type="ChEBI" id="CHEBI:18248"/>
    </ligandPart>
</feature>
<feature type="binding site" description="axial binding residue" evidence="2">
    <location>
        <position position="89"/>
    </location>
    <ligand>
        <name>heme b</name>
        <dbReference type="ChEBI" id="CHEBI:60344"/>
        <label>b566</label>
    </ligand>
    <ligandPart>
        <name>Fe</name>
        <dbReference type="ChEBI" id="CHEBI:18248"/>
    </ligandPart>
</feature>
<feature type="binding site" description="axial binding residue" evidence="2">
    <location>
        <position position="174"/>
    </location>
    <ligand>
        <name>heme b</name>
        <dbReference type="ChEBI" id="CHEBI:60344"/>
        <label>b562</label>
    </ligand>
    <ligandPart>
        <name>Fe</name>
        <dbReference type="ChEBI" id="CHEBI:18248"/>
    </ligandPart>
</feature>
<feature type="binding site" description="axial binding residue" evidence="2">
    <location>
        <position position="188"/>
    </location>
    <ligand>
        <name>heme b</name>
        <dbReference type="ChEBI" id="CHEBI:60344"/>
        <label>b566</label>
    </ligand>
    <ligandPart>
        <name>Fe</name>
        <dbReference type="ChEBI" id="CHEBI:18248"/>
    </ligandPart>
</feature>
<feature type="binding site" evidence="2">
    <location>
        <position position="193"/>
    </location>
    <ligand>
        <name>a ubiquinone</name>
        <dbReference type="ChEBI" id="CHEBI:16389"/>
    </ligand>
</feature>
<sequence>MPHQQILILFGLLPVATNISTWWNFGSMLLACSSMQVLTGFFLAVHYTANINLAFSSIMHITRDVPYGWMMQNLHAIGASMFFICIYTHIARGLYYGSYLNKKTWLSGTTLLIMLMATAFFGYVLPWGQMSFWAATVITNLLTAIPYLGTTMTTWLWGGFAINDPTLTRFFALHFILPFGIISLSSLHIMLLHEDGSSNPLGTNSDIDKIPFHPYHTYKDMLMLSLMILALLMTVAFFPDIFNDPENFSKANPLVTPQHIKPEWYFLFAYGILRSIPNKLGGALALVMSIMILLTAPFTHTSAIRSMTFRPIMQLMFWTLVATFAVITWAATKPVEPPFTTISQVASTMYFMFFITNPIMGWFENKIMKYN</sequence>
<keyword id="KW-0249">Electron transport</keyword>
<keyword id="KW-0349">Heme</keyword>
<keyword id="KW-0408">Iron</keyword>
<keyword id="KW-0472">Membrane</keyword>
<keyword id="KW-0479">Metal-binding</keyword>
<keyword id="KW-0496">Mitochondrion</keyword>
<keyword id="KW-0999">Mitochondrion inner membrane</keyword>
<keyword id="KW-0679">Respiratory chain</keyword>
<keyword id="KW-0812">Transmembrane</keyword>
<keyword id="KW-1133">Transmembrane helix</keyword>
<keyword id="KW-0813">Transport</keyword>
<keyword id="KW-0830">Ubiquinone</keyword>
<geneLocation type="mitochondrion"/>
<gene>
    <name type="primary">MT-CYB</name>
    <name type="synonym">COB</name>
    <name type="synonym">CYTB</name>
    <name type="synonym">MTCYB</name>
</gene>
<organism>
    <name type="scientific">Eryx colubrinus colubrinus</name>
    <dbReference type="NCBI Taxonomy" id="51865"/>
    <lineage>
        <taxon>Eukaryota</taxon>
        <taxon>Metazoa</taxon>
        <taxon>Chordata</taxon>
        <taxon>Craniata</taxon>
        <taxon>Vertebrata</taxon>
        <taxon>Euteleostomi</taxon>
        <taxon>Lepidosauria</taxon>
        <taxon>Squamata</taxon>
        <taxon>Bifurcata</taxon>
        <taxon>Unidentata</taxon>
        <taxon>Episquamata</taxon>
        <taxon>Toxicofera</taxon>
        <taxon>Serpentes</taxon>
        <taxon>Henophidia</taxon>
        <taxon>Boidae</taxon>
        <taxon>Erycinae</taxon>
        <taxon>Eryx</taxon>
    </lineage>
</organism>